<protein>
    <recommendedName>
        <fullName evidence="1">Octanoyltransferase</fullName>
        <ecNumber evidence="1">2.3.1.181</ecNumber>
    </recommendedName>
    <alternativeName>
        <fullName evidence="1">Lipoate-protein ligase B</fullName>
    </alternativeName>
    <alternativeName>
        <fullName evidence="1">Lipoyl/octanoyl transferase</fullName>
    </alternativeName>
    <alternativeName>
        <fullName evidence="1">Octanoyl-[acyl-carrier-protein]-protein N-octanoyltransferase</fullName>
    </alternativeName>
</protein>
<accession>Q8FNP5</accession>
<keyword id="KW-0012">Acyltransferase</keyword>
<keyword id="KW-0963">Cytoplasm</keyword>
<keyword id="KW-1185">Reference proteome</keyword>
<keyword id="KW-0808">Transferase</keyword>
<dbReference type="EC" id="2.3.1.181" evidence="1"/>
<dbReference type="EMBL" id="BA000035">
    <property type="protein sequence ID" value="BAC18909.1"/>
    <property type="status" value="ALT_INIT"/>
    <property type="molecule type" value="Genomic_DNA"/>
</dbReference>
<dbReference type="RefSeq" id="WP_006768102.1">
    <property type="nucleotide sequence ID" value="NC_004369.1"/>
</dbReference>
<dbReference type="SMR" id="Q8FNP5"/>
<dbReference type="STRING" id="196164.gene:10742527"/>
<dbReference type="KEGG" id="cef:CE2099"/>
<dbReference type="eggNOG" id="COG0321">
    <property type="taxonomic scope" value="Bacteria"/>
</dbReference>
<dbReference type="HOGENOM" id="CLU_035168_2_1_11"/>
<dbReference type="OrthoDB" id="9787061at2"/>
<dbReference type="UniPathway" id="UPA00538">
    <property type="reaction ID" value="UER00592"/>
</dbReference>
<dbReference type="Proteomes" id="UP000001409">
    <property type="component" value="Chromosome"/>
</dbReference>
<dbReference type="GO" id="GO:0005737">
    <property type="term" value="C:cytoplasm"/>
    <property type="evidence" value="ECO:0007669"/>
    <property type="project" value="UniProtKB-SubCell"/>
</dbReference>
<dbReference type="GO" id="GO:0033819">
    <property type="term" value="F:lipoyl(octanoyl) transferase activity"/>
    <property type="evidence" value="ECO:0007669"/>
    <property type="project" value="UniProtKB-EC"/>
</dbReference>
<dbReference type="GO" id="GO:0036211">
    <property type="term" value="P:protein modification process"/>
    <property type="evidence" value="ECO:0007669"/>
    <property type="project" value="InterPro"/>
</dbReference>
<dbReference type="CDD" id="cd16444">
    <property type="entry name" value="LipB"/>
    <property type="match status" value="1"/>
</dbReference>
<dbReference type="Gene3D" id="3.30.930.10">
    <property type="entry name" value="Bira Bifunctional Protein, Domain 2"/>
    <property type="match status" value="1"/>
</dbReference>
<dbReference type="HAMAP" id="MF_00013">
    <property type="entry name" value="LipB"/>
    <property type="match status" value="1"/>
</dbReference>
<dbReference type="InterPro" id="IPR045864">
    <property type="entry name" value="aa-tRNA-synth_II/BPL/LPL"/>
</dbReference>
<dbReference type="InterPro" id="IPR004143">
    <property type="entry name" value="BPL_LPL_catalytic"/>
</dbReference>
<dbReference type="InterPro" id="IPR000544">
    <property type="entry name" value="Octanoyltransferase"/>
</dbReference>
<dbReference type="InterPro" id="IPR020605">
    <property type="entry name" value="Octanoyltransferase_CS"/>
</dbReference>
<dbReference type="NCBIfam" id="TIGR00214">
    <property type="entry name" value="lipB"/>
    <property type="match status" value="1"/>
</dbReference>
<dbReference type="NCBIfam" id="NF010925">
    <property type="entry name" value="PRK14345.1"/>
    <property type="match status" value="1"/>
</dbReference>
<dbReference type="PANTHER" id="PTHR10993:SF7">
    <property type="entry name" value="LIPOYLTRANSFERASE 2, MITOCHONDRIAL-RELATED"/>
    <property type="match status" value="1"/>
</dbReference>
<dbReference type="PANTHER" id="PTHR10993">
    <property type="entry name" value="OCTANOYLTRANSFERASE"/>
    <property type="match status" value="1"/>
</dbReference>
<dbReference type="Pfam" id="PF21948">
    <property type="entry name" value="LplA-B_cat"/>
    <property type="match status" value="1"/>
</dbReference>
<dbReference type="PIRSF" id="PIRSF016262">
    <property type="entry name" value="LPLase"/>
    <property type="match status" value="1"/>
</dbReference>
<dbReference type="SUPFAM" id="SSF55681">
    <property type="entry name" value="Class II aaRS and biotin synthetases"/>
    <property type="match status" value="1"/>
</dbReference>
<dbReference type="PROSITE" id="PS51733">
    <property type="entry name" value="BPL_LPL_CATALYTIC"/>
    <property type="match status" value="1"/>
</dbReference>
<dbReference type="PROSITE" id="PS01313">
    <property type="entry name" value="LIPB"/>
    <property type="match status" value="1"/>
</dbReference>
<feature type="chain" id="PRO_0000062828" description="Octanoyltransferase">
    <location>
        <begin position="1"/>
        <end position="251"/>
    </location>
</feature>
<feature type="domain" description="BPL/LPL catalytic" evidence="2">
    <location>
        <begin position="49"/>
        <end position="230"/>
    </location>
</feature>
<feature type="active site" description="Acyl-thioester intermediate" evidence="1">
    <location>
        <position position="191"/>
    </location>
</feature>
<feature type="binding site" evidence="1">
    <location>
        <begin position="87"/>
        <end position="94"/>
    </location>
    <ligand>
        <name>substrate</name>
    </ligand>
</feature>
<feature type="binding site" evidence="1">
    <location>
        <begin position="160"/>
        <end position="162"/>
    </location>
    <ligand>
        <name>substrate</name>
    </ligand>
</feature>
<feature type="binding site" evidence="1">
    <location>
        <begin position="173"/>
        <end position="175"/>
    </location>
    <ligand>
        <name>substrate</name>
    </ligand>
</feature>
<feature type="site" description="Lowers pKa of active site Cys" evidence="1">
    <location>
        <position position="157"/>
    </location>
</feature>
<reference key="1">
    <citation type="journal article" date="2003" name="Genome Res.">
        <title>Comparative complete genome sequence analysis of the amino acid replacements responsible for the thermostability of Corynebacterium efficiens.</title>
        <authorList>
            <person name="Nishio Y."/>
            <person name="Nakamura Y."/>
            <person name="Kawarabayasi Y."/>
            <person name="Usuda Y."/>
            <person name="Kimura E."/>
            <person name="Sugimoto S."/>
            <person name="Matsui K."/>
            <person name="Yamagishi A."/>
            <person name="Kikuchi H."/>
            <person name="Ikeo K."/>
            <person name="Gojobori T."/>
        </authorList>
    </citation>
    <scope>NUCLEOTIDE SEQUENCE [LARGE SCALE GENOMIC DNA]</scope>
    <source>
        <strain>DSM 44549 / YS-314 / AJ 12310 / JCM 11189 / NBRC 100395</strain>
    </source>
</reference>
<gene>
    <name evidence="1" type="primary">lipB</name>
    <name type="ordered locus">CE2099</name>
</gene>
<name>LIPB_COREF</name>
<proteinExistence type="inferred from homology"/>
<comment type="function">
    <text evidence="1">Catalyzes the transfer of endogenously produced octanoic acid from octanoyl-acyl-carrier-protein onto the lipoyl domains of lipoate-dependent enzymes. Lipoyl-ACP can also act as a substrate although octanoyl-ACP is likely to be the physiological substrate.</text>
</comment>
<comment type="catalytic activity">
    <reaction evidence="1">
        <text>octanoyl-[ACP] + L-lysyl-[protein] = N(6)-octanoyl-L-lysyl-[protein] + holo-[ACP] + H(+)</text>
        <dbReference type="Rhea" id="RHEA:17665"/>
        <dbReference type="Rhea" id="RHEA-COMP:9636"/>
        <dbReference type="Rhea" id="RHEA-COMP:9685"/>
        <dbReference type="Rhea" id="RHEA-COMP:9752"/>
        <dbReference type="Rhea" id="RHEA-COMP:9928"/>
        <dbReference type="ChEBI" id="CHEBI:15378"/>
        <dbReference type="ChEBI" id="CHEBI:29969"/>
        <dbReference type="ChEBI" id="CHEBI:64479"/>
        <dbReference type="ChEBI" id="CHEBI:78463"/>
        <dbReference type="ChEBI" id="CHEBI:78809"/>
        <dbReference type="EC" id="2.3.1.181"/>
    </reaction>
</comment>
<comment type="pathway">
    <text evidence="1">Protein modification; protein lipoylation via endogenous pathway; protein N(6)-(lipoyl)lysine from octanoyl-[acyl-carrier-protein]: step 1/2.</text>
</comment>
<comment type="subcellular location">
    <subcellularLocation>
        <location evidence="1">Cytoplasm</location>
    </subcellularLocation>
</comment>
<comment type="miscellaneous">
    <text evidence="1">In the reaction, the free carboxyl group of octanoic acid is attached via an amide linkage to the epsilon-amino group of a specific lysine residue of lipoyl domains of lipoate-dependent enzymes.</text>
</comment>
<comment type="similarity">
    <text evidence="1">Belongs to the LipB family.</text>
</comment>
<comment type="sequence caution" evidence="3">
    <conflict type="erroneous initiation">
        <sequence resource="EMBL-CDS" id="BAC18909"/>
    </conflict>
    <text>Extended N-terminus.</text>
</comment>
<evidence type="ECO:0000255" key="1">
    <source>
        <dbReference type="HAMAP-Rule" id="MF_00013"/>
    </source>
</evidence>
<evidence type="ECO:0000255" key="2">
    <source>
        <dbReference type="PROSITE-ProRule" id="PRU01067"/>
    </source>
</evidence>
<evidence type="ECO:0000305" key="3"/>
<organism>
    <name type="scientific">Corynebacterium efficiens (strain DSM 44549 / YS-314 / AJ 12310 / JCM 11189 / NBRC 100395)</name>
    <dbReference type="NCBI Taxonomy" id="196164"/>
    <lineage>
        <taxon>Bacteria</taxon>
        <taxon>Bacillati</taxon>
        <taxon>Actinomycetota</taxon>
        <taxon>Actinomycetes</taxon>
        <taxon>Mycobacteriales</taxon>
        <taxon>Corynebacteriaceae</taxon>
        <taxon>Corynebacterium</taxon>
    </lineage>
</organism>
<sequence length="251" mass="27465">MTAPRAPFFPADRSIRASDDPIEVQHLGTVDYRDSWDLQASLAEQRARDEIADQILVLEHPSVYTAGKRTQPEDLPTNGLPVIEVDRGGRITWHGPGQLVMYPIIKLAEPIDVVDYVRRLEEALIQTVRTFGVPEAGRVDGRSGVWVPAHDGYPDSKVAALGIRVTRGVTMHGLALNCNNTLEFYDHIIACGIEDAGLTTLSRELGRDVPTTELVDPLISDLDDAFAGRLTVADHSFASAPDPTRALPKRG</sequence>